<keyword id="KW-1015">Disulfide bond</keyword>
<keyword id="KW-0960">Knottin</keyword>
<keyword id="KW-0528">Neurotoxin</keyword>
<keyword id="KW-0964">Secreted</keyword>
<keyword id="KW-0732">Signal</keyword>
<keyword id="KW-0800">Toxin</keyword>
<dbReference type="SMR" id="P0DTY5"/>
<dbReference type="GO" id="GO:0005576">
    <property type="term" value="C:extracellular region"/>
    <property type="evidence" value="ECO:0007669"/>
    <property type="project" value="UniProtKB-SubCell"/>
</dbReference>
<dbReference type="GO" id="GO:0090729">
    <property type="term" value="F:toxin activity"/>
    <property type="evidence" value="ECO:0007669"/>
    <property type="project" value="UniProtKB-KW"/>
</dbReference>
<name>O1623_CONCL</name>
<reference key="1">
    <citation type="journal article" date="2019" name="Toxins">
        <title>The diversified O-superfamily in Californiconus californicus presents a conotoxin with antimycobacterial activity.</title>
        <authorList>
            <person name="Bernaldez-Sarabia J."/>
            <person name="Figueroa-Montiel A."/>
            <person name="Duenas S."/>
            <person name="Cervantes-Luevano K."/>
            <person name="Beltran J.A."/>
            <person name="Ortiz E."/>
            <person name="Jimenez S."/>
            <person name="Possani L.D."/>
            <person name="Paniagua-Solis J.F."/>
            <person name="Gonzalez-Canudas J."/>
            <person name="Licea-Navarro A."/>
        </authorList>
    </citation>
    <scope>NUCLEOTIDE SEQUENCE [MRNA]</scope>
    <source>
        <tissue>Venom duct</tissue>
    </source>
</reference>
<comment type="function">
    <text evidence="3">Probable neurotoxin.</text>
</comment>
<comment type="subcellular location">
    <subcellularLocation>
        <location evidence="4">Secreted</location>
    </subcellularLocation>
</comment>
<comment type="tissue specificity">
    <text evidence="4">Expressed by the venom duct.</text>
</comment>
<comment type="domain">
    <text evidence="3">The cysteine framework is VI/VII (C-C-CC-C-C).</text>
</comment>
<comment type="domain">
    <text evidence="3">The presence of a 'disulfide through disulfide knot' structurally defines this protein as a knottin.</text>
</comment>
<comment type="similarity">
    <text evidence="3">Belongs to the conotoxin O1 superfamily.</text>
</comment>
<organism>
    <name type="scientific">Californiconus californicus</name>
    <name type="common">California cone</name>
    <name type="synonym">Conus californicus</name>
    <dbReference type="NCBI Taxonomy" id="1736779"/>
    <lineage>
        <taxon>Eukaryota</taxon>
        <taxon>Metazoa</taxon>
        <taxon>Spiralia</taxon>
        <taxon>Lophotrochozoa</taxon>
        <taxon>Mollusca</taxon>
        <taxon>Gastropoda</taxon>
        <taxon>Caenogastropoda</taxon>
        <taxon>Neogastropoda</taxon>
        <taxon>Conoidea</taxon>
        <taxon>Conidae</taxon>
        <taxon>Californiconus</taxon>
    </lineage>
</organism>
<feature type="signal peptide" evidence="1">
    <location>
        <begin position="1"/>
        <end position="22"/>
    </location>
</feature>
<feature type="chain" id="PRO_0000450967" description="Conotoxin Cal6.23" evidence="3">
    <location>
        <begin position="23"/>
        <end position="53"/>
    </location>
</feature>
<feature type="disulfide bond" evidence="3">
    <location>
        <begin position="25"/>
        <end position="40"/>
    </location>
</feature>
<feature type="disulfide bond" evidence="3">
    <location>
        <begin position="32"/>
        <end position="47"/>
    </location>
</feature>
<feature type="disulfide bond" evidence="3">
    <location>
        <begin position="39"/>
        <end position="51"/>
    </location>
</feature>
<protein>
    <recommendedName>
        <fullName evidence="3">Conotoxin Cal6.23</fullName>
    </recommendedName>
    <alternativeName>
        <fullName evidence="2">O1_cal6.23</fullName>
    </alternativeName>
</protein>
<proteinExistence type="inferred from homology"/>
<sequence>MKLTAVLMVAVLVLTACQLITANECSRKGEWCGLESVLCCNGGSWNCWFVCTA</sequence>
<accession>P0DTY5</accession>
<evidence type="ECO:0000255" key="1"/>
<evidence type="ECO:0000303" key="2">
    <source>
    </source>
</evidence>
<evidence type="ECO:0000305" key="3"/>
<evidence type="ECO:0000305" key="4">
    <source>
    </source>
</evidence>